<reference key="1">
    <citation type="submission" date="2011-12" db="EMBL/GenBank/DDBJ databases">
        <title>Complete genome sequence of Klebsiella oxytoca strain KCTC 1686.</title>
        <authorList>
            <person name="Shin S.H."/>
            <person name="Kim S."/>
            <person name="Kim J.Y."/>
            <person name="Yang K.-S."/>
            <person name="Seo J.-S."/>
        </authorList>
    </citation>
    <scope>NUCLEOTIDE SEQUENCE [LARGE SCALE GENOMIC DNA]</scope>
    <source>
        <strain>ATCC 8724 / DSM 4798 / JCM 20051 / NBRC 3318 / NRRL B-199 / KCTC 1686 / BUCSAV 143 / CCM 1901</strain>
    </source>
</reference>
<reference key="2">
    <citation type="journal article" date="2012" name="J. Bacteriol.">
        <title>Complete genome sequence of Klebsiella oxytoca KCTC 1686, used in production of 2,3-butanediol.</title>
        <authorList>
            <person name="Shin S.H."/>
            <person name="Kim S."/>
            <person name="Kim J.Y."/>
            <person name="Lee S."/>
            <person name="Um Y."/>
            <person name="Oh M.K."/>
            <person name="Kim Y.R."/>
            <person name="Lee J."/>
            <person name="Yang K.S."/>
        </authorList>
    </citation>
    <scope>NUCLEOTIDE SEQUENCE [LARGE SCALE GENOMIC DNA]</scope>
    <source>
        <strain>ATCC 8724 / DSM 4798 / JCM 20051 / NBRC 3318 / NRRL B-199 / KCTC 1686 / BUCSAV 143 / CCM 1901</strain>
    </source>
</reference>
<reference key="3">
    <citation type="journal article" date="2016" name="Mol. Microbiol.">
        <title>Pseudopilin residue E5 is essential for recruitment by the type 2 secretion system assembly platform.</title>
        <authorList>
            <person name="Nivaskumar M."/>
            <person name="Santos-Moreno J."/>
            <person name="Malosse C."/>
            <person name="Nadeau N."/>
            <person name="Chamot-Rooke J."/>
            <person name="Tran Van Nhieu G."/>
            <person name="Francetic O."/>
        </authorList>
    </citation>
    <scope>FUNCTION</scope>
    <scope>MUTAGENESIS OF GLU-10</scope>
    <scope>INTERACTION WITH PULM</scope>
</reference>
<proteinExistence type="evidence at protein level"/>
<comment type="function">
    <text evidence="1 3">Component of the type II secretion system required for the energy-dependent secretion of extracellular factors such as proteases and toxins from the periplasm (PubMed:27260845). Part of the pseudopilus tip complex that is critical for the recognition and binding of secretion substrates (By similarity).</text>
</comment>
<comment type="subunit">
    <text evidence="1 3">Type II secretion is composed of four main components: the outer membrane complex, the inner membrane complex, the cytoplasmic secretion ATPase and the periplasm-spanning pseudopilus. Interacts with core component PulG (By similarity). Interacts with PulM (PubMed:27260845).</text>
</comment>
<comment type="subcellular location">
    <subcellularLocation>
        <location evidence="1">Cell inner membrane</location>
        <topology evidence="2">Single-pass membrane protein</topology>
    </subcellularLocation>
</comment>
<comment type="PTM">
    <text evidence="1">Cleaved by prepilin peptidase.</text>
</comment>
<comment type="PTM">
    <text evidence="1">Methylated by prepilin peptidase at the amino group of the N-terminal phenylalanine once the leader sequence is cleaved by prepilin peptidase.</text>
</comment>
<gene>
    <name type="primary">pulH</name>
    <name type="ordered locus">KOX_13585</name>
</gene>
<name>GSPH_KLEM8</name>
<protein>
    <recommendedName>
        <fullName>Type II secretion system protein H</fullName>
        <shortName>T2SS minor pseudopilin H</shortName>
    </recommendedName>
    <alternativeName>
        <fullName>General secretion pathway protein H</fullName>
    </alternativeName>
</protein>
<accession>A0A0H3H546</accession>
<organism>
    <name type="scientific">Klebsiella michiganensis (strain ATCC 8724 / DSM 4798 / JCM 20051 / NBRC 3318 / NRRL B-199 / KCTC 1686 / BUCSAV 143 / CCM 1901)</name>
    <dbReference type="NCBI Taxonomy" id="1006551"/>
    <lineage>
        <taxon>Bacteria</taxon>
        <taxon>Pseudomonadati</taxon>
        <taxon>Pseudomonadota</taxon>
        <taxon>Gammaproteobacteria</taxon>
        <taxon>Enterobacterales</taxon>
        <taxon>Enterobacteriaceae</taxon>
        <taxon>Klebsiella/Raoultella group</taxon>
        <taxon>Klebsiella</taxon>
    </lineage>
</organism>
<keyword id="KW-0997">Cell inner membrane</keyword>
<keyword id="KW-1003">Cell membrane</keyword>
<keyword id="KW-0472">Membrane</keyword>
<keyword id="KW-0488">Methylation</keyword>
<keyword id="KW-0812">Transmembrane</keyword>
<keyword id="KW-1133">Transmembrane helix</keyword>
<feature type="propeptide" id="PRO_0000449528" description="Leader sequence" evidence="1">
    <location>
        <begin position="1"/>
        <end position="5"/>
    </location>
</feature>
<feature type="chain" id="PRO_0000449529" description="Type II secretion system protein H">
    <location>
        <begin position="6"/>
        <end position="183"/>
    </location>
</feature>
<feature type="transmembrane region" description="Helical" evidence="2">
    <location>
        <begin position="6"/>
        <end position="26"/>
    </location>
</feature>
<feature type="modified residue" description="N-methylphenylalanine" evidence="1">
    <location>
        <position position="6"/>
    </location>
</feature>
<feature type="mutagenesis site" description="More than 90% loss of type II secretion due to loss of interaction with PulM." evidence="3">
    <original>E</original>
    <variation>A</variation>
    <location>
        <position position="10"/>
    </location>
</feature>
<dbReference type="EMBL" id="CP003218">
    <property type="protein sequence ID" value="AEX04441.1"/>
    <property type="molecule type" value="Genomic_DNA"/>
</dbReference>
<dbReference type="SMR" id="A0A0H3H546"/>
<dbReference type="KEGG" id="kox:KOX_13585"/>
<dbReference type="HOGENOM" id="CLU_125878_0_0_6"/>
<dbReference type="Proteomes" id="UP000007843">
    <property type="component" value="Chromosome"/>
</dbReference>
<dbReference type="GO" id="GO:0005886">
    <property type="term" value="C:plasma membrane"/>
    <property type="evidence" value="ECO:0007669"/>
    <property type="project" value="UniProtKB-SubCell"/>
</dbReference>
<dbReference type="GO" id="GO:0015627">
    <property type="term" value="C:type II protein secretion system complex"/>
    <property type="evidence" value="ECO:0007669"/>
    <property type="project" value="InterPro"/>
</dbReference>
<dbReference type="GO" id="GO:0015628">
    <property type="term" value="P:protein secretion by the type II secretion system"/>
    <property type="evidence" value="ECO:0007669"/>
    <property type="project" value="InterPro"/>
</dbReference>
<dbReference type="Gene3D" id="3.55.40.10">
    <property type="entry name" value="minor pseudopilin epsh domain"/>
    <property type="match status" value="1"/>
</dbReference>
<dbReference type="InterPro" id="IPR012902">
    <property type="entry name" value="N_methyl_site"/>
</dbReference>
<dbReference type="InterPro" id="IPR045584">
    <property type="entry name" value="Pilin-like"/>
</dbReference>
<dbReference type="InterPro" id="IPR002416">
    <property type="entry name" value="T2SS_protein-GspH"/>
</dbReference>
<dbReference type="InterPro" id="IPR049875">
    <property type="entry name" value="TypeII_GspH"/>
</dbReference>
<dbReference type="NCBIfam" id="TIGR02532">
    <property type="entry name" value="IV_pilin_GFxxxE"/>
    <property type="match status" value="1"/>
</dbReference>
<dbReference type="NCBIfam" id="TIGR01708">
    <property type="entry name" value="typeII_sec_gspH"/>
    <property type="match status" value="1"/>
</dbReference>
<dbReference type="PRINTS" id="PR00885">
    <property type="entry name" value="BCTERIALGSPH"/>
</dbReference>
<dbReference type="SUPFAM" id="SSF54523">
    <property type="entry name" value="Pili subunits"/>
    <property type="match status" value="1"/>
</dbReference>
<sequence>MRQRGFTVLEMMLVVLLMGSAASLVIMSFPAMQQDTAERQLQRFQAQLEFAMDSGMQNDRLLGIQIRPNGWQFQVLQSQAAETRSSVAHSDRWQGYVWQIWQPRQAALGGQVPDNQPLTLRLPPPQEWPPTAEPAADPDILLLPGGEITPFTLIFGEKDDRSEVWLRVDESGAIATSAKGGAP</sequence>
<evidence type="ECO:0000250" key="1">
    <source>
        <dbReference type="UniProtKB" id="Q00515"/>
    </source>
</evidence>
<evidence type="ECO:0000255" key="2"/>
<evidence type="ECO:0000269" key="3">
    <source>
    </source>
</evidence>